<proteinExistence type="inferred from homology"/>
<accession>A7FFQ9</accession>
<sequence>MTHKQRAIFEPTLVRTALLDAVKKLDPRVQWRNPVMFVVYLGSWLTTLIWLAILSGHTTGSAMFTGSIALWLWFTVLFANMAEALAEGRSKAQAASLRGVKKTSWAKKLSEARVDAPQEKVSADSLRKGDLVLIEAGDTVPCDGEVLEGGASVDESAITGESAPVIRESGGDFSSVTGGTRVLSDWLVVECRVNPGETFLDRMIAMVEGAKRRKTPNEVALTILLVALTIVFLLATATLYPFSVFSVEASQAGSPVTITVLVALLVCLIPTTIGGLLSAIGVAGMSRMLGANVIATSGRAVEAAGDVDVLLLDKTGTITLGNRQASEFLPAPGVTEQQLADAAQLSSLADETPEGRSIVVLAKQRFNLRERDLHSLNATFIPFSAQTRMSGVNVQERMIRKGAVDAIRRHVESNQGHFPPAVDDLVASVARTGGTPLVVAEGSRVLGVVALKDIVKGGIKERFAELRKMGIKTVMITGDNRLTAAAIAAEAGVDDFLAEATPEAKLALIRQYQAEGRLVAMTGDGTNDAPALAQADVAVAMNSGTQAAKEAGNMVDLDSNPTKLIEVVHIGKQMLMTRGSLTTFSIANDVAKYFAIIPAAFAATYPQLNALNIMQLHSPSSAILSAVIFNALVIVFLIPLALKGVSYKAMSAAALLRRNLWIYGLGGLLVPFVGIKLIDLLLTALNMG</sequence>
<feature type="chain" id="PRO_1000059254" description="Potassium-transporting ATPase ATP-binding subunit">
    <location>
        <begin position="1"/>
        <end position="688"/>
    </location>
</feature>
<feature type="transmembrane region" description="Helical" evidence="1">
    <location>
        <begin position="34"/>
        <end position="54"/>
    </location>
</feature>
<feature type="transmembrane region" description="Helical" evidence="1">
    <location>
        <begin position="62"/>
        <end position="82"/>
    </location>
</feature>
<feature type="transmembrane region" description="Helical" evidence="1">
    <location>
        <begin position="219"/>
        <end position="239"/>
    </location>
</feature>
<feature type="transmembrane region" description="Helical" evidence="1">
    <location>
        <begin position="260"/>
        <end position="280"/>
    </location>
</feature>
<feature type="transmembrane region" description="Helical" evidence="1">
    <location>
        <begin position="594"/>
        <end position="614"/>
    </location>
</feature>
<feature type="transmembrane region" description="Helical" evidence="1">
    <location>
        <begin position="622"/>
        <end position="642"/>
    </location>
</feature>
<feature type="transmembrane region" description="Helical" evidence="1">
    <location>
        <begin position="662"/>
        <end position="682"/>
    </location>
</feature>
<feature type="active site" description="4-aspartylphosphate intermediate" evidence="1">
    <location>
        <position position="313"/>
    </location>
</feature>
<feature type="binding site" evidence="1">
    <location>
        <position position="350"/>
    </location>
    <ligand>
        <name>ATP</name>
        <dbReference type="ChEBI" id="CHEBI:30616"/>
    </ligand>
</feature>
<feature type="binding site" evidence="1">
    <location>
        <position position="354"/>
    </location>
    <ligand>
        <name>ATP</name>
        <dbReference type="ChEBI" id="CHEBI:30616"/>
    </ligand>
</feature>
<feature type="binding site" evidence="1">
    <location>
        <begin position="383"/>
        <end position="390"/>
    </location>
    <ligand>
        <name>ATP</name>
        <dbReference type="ChEBI" id="CHEBI:30616"/>
    </ligand>
</feature>
<feature type="binding site" evidence="1">
    <location>
        <position position="401"/>
    </location>
    <ligand>
        <name>ATP</name>
        <dbReference type="ChEBI" id="CHEBI:30616"/>
    </ligand>
</feature>
<feature type="binding site" evidence="1">
    <location>
        <position position="524"/>
    </location>
    <ligand>
        <name>Mg(2+)</name>
        <dbReference type="ChEBI" id="CHEBI:18420"/>
    </ligand>
</feature>
<feature type="binding site" evidence="1">
    <location>
        <position position="528"/>
    </location>
    <ligand>
        <name>Mg(2+)</name>
        <dbReference type="ChEBI" id="CHEBI:18420"/>
    </ligand>
</feature>
<evidence type="ECO:0000255" key="1">
    <source>
        <dbReference type="HAMAP-Rule" id="MF_00285"/>
    </source>
</evidence>
<dbReference type="EC" id="7.2.2.6" evidence="1"/>
<dbReference type="EMBL" id="CP000720">
    <property type="protein sequence ID" value="ABS46846.1"/>
    <property type="molecule type" value="Genomic_DNA"/>
</dbReference>
<dbReference type="RefSeq" id="WP_012104771.1">
    <property type="nucleotide sequence ID" value="NC_009708.1"/>
</dbReference>
<dbReference type="SMR" id="A7FFQ9"/>
<dbReference type="KEGG" id="ypi:YpsIP31758_1106"/>
<dbReference type="HOGENOM" id="CLU_025728_2_0_6"/>
<dbReference type="Proteomes" id="UP000002412">
    <property type="component" value="Chromosome"/>
</dbReference>
<dbReference type="GO" id="GO:0005886">
    <property type="term" value="C:plasma membrane"/>
    <property type="evidence" value="ECO:0007669"/>
    <property type="project" value="UniProtKB-SubCell"/>
</dbReference>
<dbReference type="GO" id="GO:0005524">
    <property type="term" value="F:ATP binding"/>
    <property type="evidence" value="ECO:0007669"/>
    <property type="project" value="UniProtKB-UniRule"/>
</dbReference>
<dbReference type="GO" id="GO:0016887">
    <property type="term" value="F:ATP hydrolysis activity"/>
    <property type="evidence" value="ECO:0007669"/>
    <property type="project" value="InterPro"/>
</dbReference>
<dbReference type="GO" id="GO:0000287">
    <property type="term" value="F:magnesium ion binding"/>
    <property type="evidence" value="ECO:0007669"/>
    <property type="project" value="UniProtKB-UniRule"/>
</dbReference>
<dbReference type="GO" id="GO:0008556">
    <property type="term" value="F:P-type potassium transmembrane transporter activity"/>
    <property type="evidence" value="ECO:0007669"/>
    <property type="project" value="UniProtKB-UniRule"/>
</dbReference>
<dbReference type="CDD" id="cd02078">
    <property type="entry name" value="P-type_ATPase_K"/>
    <property type="match status" value="1"/>
</dbReference>
<dbReference type="FunFam" id="2.70.150.10:FF:000010">
    <property type="entry name" value="Potassium-transporting ATPase ATP-binding subunit"/>
    <property type="match status" value="1"/>
</dbReference>
<dbReference type="FunFam" id="3.40.1110.10:FF:000007">
    <property type="entry name" value="Potassium-transporting ATPase ATP-binding subunit"/>
    <property type="match status" value="1"/>
</dbReference>
<dbReference type="Gene3D" id="3.40.1110.10">
    <property type="entry name" value="Calcium-transporting ATPase, cytoplasmic domain N"/>
    <property type="match status" value="1"/>
</dbReference>
<dbReference type="Gene3D" id="2.70.150.10">
    <property type="entry name" value="Calcium-transporting ATPase, cytoplasmic transduction domain A"/>
    <property type="match status" value="1"/>
</dbReference>
<dbReference type="Gene3D" id="3.40.50.1000">
    <property type="entry name" value="HAD superfamily/HAD-like"/>
    <property type="match status" value="1"/>
</dbReference>
<dbReference type="HAMAP" id="MF_00285">
    <property type="entry name" value="KdpB"/>
    <property type="match status" value="1"/>
</dbReference>
<dbReference type="InterPro" id="IPR023299">
    <property type="entry name" value="ATPase_P-typ_cyto_dom_N"/>
</dbReference>
<dbReference type="InterPro" id="IPR018303">
    <property type="entry name" value="ATPase_P-typ_P_site"/>
</dbReference>
<dbReference type="InterPro" id="IPR023298">
    <property type="entry name" value="ATPase_P-typ_TM_dom_sf"/>
</dbReference>
<dbReference type="InterPro" id="IPR008250">
    <property type="entry name" value="ATPase_P-typ_transduc_dom_A_sf"/>
</dbReference>
<dbReference type="InterPro" id="IPR036412">
    <property type="entry name" value="HAD-like_sf"/>
</dbReference>
<dbReference type="InterPro" id="IPR023214">
    <property type="entry name" value="HAD_sf"/>
</dbReference>
<dbReference type="InterPro" id="IPR006391">
    <property type="entry name" value="P-type_ATPase_bsu_IA"/>
</dbReference>
<dbReference type="InterPro" id="IPR001757">
    <property type="entry name" value="P_typ_ATPase"/>
</dbReference>
<dbReference type="InterPro" id="IPR044492">
    <property type="entry name" value="P_typ_ATPase_HD_dom"/>
</dbReference>
<dbReference type="NCBIfam" id="TIGR01494">
    <property type="entry name" value="ATPase_P-type"/>
    <property type="match status" value="2"/>
</dbReference>
<dbReference type="NCBIfam" id="TIGR01497">
    <property type="entry name" value="kdpB"/>
    <property type="match status" value="1"/>
</dbReference>
<dbReference type="PANTHER" id="PTHR43743">
    <property type="entry name" value="POTASSIUM-TRANSPORTING ATPASE ATP-BINDING SUBUNIT"/>
    <property type="match status" value="1"/>
</dbReference>
<dbReference type="PANTHER" id="PTHR43743:SF1">
    <property type="entry name" value="POTASSIUM-TRANSPORTING ATPASE ATP-BINDING SUBUNIT"/>
    <property type="match status" value="1"/>
</dbReference>
<dbReference type="Pfam" id="PF00122">
    <property type="entry name" value="E1-E2_ATPase"/>
    <property type="match status" value="1"/>
</dbReference>
<dbReference type="Pfam" id="PF00702">
    <property type="entry name" value="Hydrolase"/>
    <property type="match status" value="1"/>
</dbReference>
<dbReference type="PRINTS" id="PR00119">
    <property type="entry name" value="CATATPASE"/>
</dbReference>
<dbReference type="SFLD" id="SFLDS00003">
    <property type="entry name" value="Haloacid_Dehalogenase"/>
    <property type="match status" value="1"/>
</dbReference>
<dbReference type="SFLD" id="SFLDF00027">
    <property type="entry name" value="p-type_atpase"/>
    <property type="match status" value="1"/>
</dbReference>
<dbReference type="SUPFAM" id="SSF81653">
    <property type="entry name" value="Calcium ATPase, transduction domain A"/>
    <property type="match status" value="1"/>
</dbReference>
<dbReference type="SUPFAM" id="SSF81665">
    <property type="entry name" value="Calcium ATPase, transmembrane domain M"/>
    <property type="match status" value="1"/>
</dbReference>
<dbReference type="SUPFAM" id="SSF56784">
    <property type="entry name" value="HAD-like"/>
    <property type="match status" value="1"/>
</dbReference>
<dbReference type="SUPFAM" id="SSF81660">
    <property type="entry name" value="Metal cation-transporting ATPase, ATP-binding domain N"/>
    <property type="match status" value="1"/>
</dbReference>
<dbReference type="PROSITE" id="PS00154">
    <property type="entry name" value="ATPASE_E1_E2"/>
    <property type="match status" value="1"/>
</dbReference>
<keyword id="KW-0067">ATP-binding</keyword>
<keyword id="KW-0997">Cell inner membrane</keyword>
<keyword id="KW-1003">Cell membrane</keyword>
<keyword id="KW-0406">Ion transport</keyword>
<keyword id="KW-0460">Magnesium</keyword>
<keyword id="KW-0472">Membrane</keyword>
<keyword id="KW-0479">Metal-binding</keyword>
<keyword id="KW-0547">Nucleotide-binding</keyword>
<keyword id="KW-0597">Phosphoprotein</keyword>
<keyword id="KW-0630">Potassium</keyword>
<keyword id="KW-0633">Potassium transport</keyword>
<keyword id="KW-1278">Translocase</keyword>
<keyword id="KW-0812">Transmembrane</keyword>
<keyword id="KW-1133">Transmembrane helix</keyword>
<keyword id="KW-0813">Transport</keyword>
<reference key="1">
    <citation type="journal article" date="2007" name="PLoS Genet.">
        <title>The complete genome sequence of Yersinia pseudotuberculosis IP31758, the causative agent of Far East scarlet-like fever.</title>
        <authorList>
            <person name="Eppinger M."/>
            <person name="Rosovitz M.J."/>
            <person name="Fricke W.F."/>
            <person name="Rasko D.A."/>
            <person name="Kokorina G."/>
            <person name="Fayolle C."/>
            <person name="Lindler L.E."/>
            <person name="Carniel E."/>
            <person name="Ravel J."/>
        </authorList>
    </citation>
    <scope>NUCLEOTIDE SEQUENCE [LARGE SCALE GENOMIC DNA]</scope>
    <source>
        <strain>IP 31758</strain>
    </source>
</reference>
<protein>
    <recommendedName>
        <fullName evidence="1">Potassium-transporting ATPase ATP-binding subunit</fullName>
        <ecNumber evidence="1">7.2.2.6</ecNumber>
    </recommendedName>
    <alternativeName>
        <fullName evidence="1">ATP phosphohydrolase [potassium-transporting] B chain</fullName>
    </alternativeName>
    <alternativeName>
        <fullName evidence="1">Potassium-binding and translocating subunit B</fullName>
    </alternativeName>
    <alternativeName>
        <fullName evidence="1">Potassium-translocating ATPase B chain</fullName>
    </alternativeName>
</protein>
<organism>
    <name type="scientific">Yersinia pseudotuberculosis serotype O:1b (strain IP 31758)</name>
    <dbReference type="NCBI Taxonomy" id="349747"/>
    <lineage>
        <taxon>Bacteria</taxon>
        <taxon>Pseudomonadati</taxon>
        <taxon>Pseudomonadota</taxon>
        <taxon>Gammaproteobacteria</taxon>
        <taxon>Enterobacterales</taxon>
        <taxon>Yersiniaceae</taxon>
        <taxon>Yersinia</taxon>
    </lineage>
</organism>
<comment type="function">
    <text evidence="1">Part of the high-affinity ATP-driven potassium transport (or Kdp) system, which catalyzes the hydrolysis of ATP coupled with the electrogenic transport of potassium into the cytoplasm. This subunit is responsible for energy coupling to the transport system and for the release of the potassium ions to the cytoplasm.</text>
</comment>
<comment type="catalytic activity">
    <reaction evidence="1">
        <text>K(+)(out) + ATP + H2O = K(+)(in) + ADP + phosphate + H(+)</text>
        <dbReference type="Rhea" id="RHEA:16777"/>
        <dbReference type="ChEBI" id="CHEBI:15377"/>
        <dbReference type="ChEBI" id="CHEBI:15378"/>
        <dbReference type="ChEBI" id="CHEBI:29103"/>
        <dbReference type="ChEBI" id="CHEBI:30616"/>
        <dbReference type="ChEBI" id="CHEBI:43474"/>
        <dbReference type="ChEBI" id="CHEBI:456216"/>
        <dbReference type="EC" id="7.2.2.6"/>
    </reaction>
    <physiologicalReaction direction="left-to-right" evidence="1">
        <dbReference type="Rhea" id="RHEA:16778"/>
    </physiologicalReaction>
</comment>
<comment type="subunit">
    <text evidence="1">The system is composed of three essential subunits: KdpA, KdpB and KdpC.</text>
</comment>
<comment type="subcellular location">
    <subcellularLocation>
        <location evidence="1">Cell inner membrane</location>
        <topology evidence="1">Multi-pass membrane protein</topology>
    </subcellularLocation>
</comment>
<comment type="similarity">
    <text evidence="1">Belongs to the cation transport ATPase (P-type) (TC 3.A.3) family. Type IA subfamily.</text>
</comment>
<name>KDPB_YERP3</name>
<gene>
    <name evidence="1" type="primary">kdpB</name>
    <name type="ordered locus">YpsIP31758_1106</name>
</gene>